<organismHost>
    <name type="scientific">Equus caballus</name>
    <name type="common">Horse</name>
    <dbReference type="NCBI Taxonomy" id="9796"/>
</organismHost>
<evidence type="ECO:0000305" key="1"/>
<reference key="1">
    <citation type="journal article" date="1991" name="J. Virol.">
        <title>Antigenic and protein sequence homology between VP13/14, a herpes simplex virus type 1 tegument protein, and gp10, a glycoprotein of equine herpesvirus 1 and 4.</title>
        <authorList>
            <person name="Whittaker G.R."/>
            <person name="Riggio M.P."/>
            <person name="Halliburton I.W."/>
            <person name="Killington R.A."/>
            <person name="Allen G.P."/>
            <person name="Meredith D.M."/>
        </authorList>
    </citation>
    <scope>NUCLEOTIDE SEQUENCE [GENOMIC DNA]</scope>
</reference>
<accession>Q00040</accession>
<proteinExistence type="inferred from homology"/>
<protein>
    <recommendedName>
        <fullName>DNA helicase/primase complex protein</fullName>
    </recommendedName>
    <alternativeName>
        <fullName>DNA replication protein UL52</fullName>
    </alternativeName>
</protein>
<sequence>MALNNPNPTIRVLYATDSCVITYSLMLLTGQESSEDAYVISYDWSSELDDLFGSQPRVLDADVGDSWDTTDQSDEELLAAALLERKPSVSFCLLSGIVGGASDEPQERIRPMFVCAFLTLTGARALTKTLLHGHPISSKILLQALVDGDTFQLHNDLILALAITLDNATARTGRTAAAAKYDPQRGSVKAAILGHST</sequence>
<gene>
    <name type="primary">7</name>
    <name type="synonym">B1</name>
</gene>
<organism>
    <name type="scientific">Equine herpesvirus 4 (strain 1942)</name>
    <name type="common">EHV-4</name>
    <name type="synonym">Equine rhinopneumonitis virus</name>
    <dbReference type="NCBI Taxonomy" id="10333"/>
    <lineage>
        <taxon>Viruses</taxon>
        <taxon>Duplodnaviria</taxon>
        <taxon>Heunggongvirae</taxon>
        <taxon>Peploviricota</taxon>
        <taxon>Herviviricetes</taxon>
        <taxon>Herpesvirales</taxon>
        <taxon>Orthoherpesviridae</taxon>
        <taxon>Alphaherpesvirinae</taxon>
        <taxon>Varicellovirus</taxon>
        <taxon>Varicellovirus equidalpha4</taxon>
        <taxon>Equid alphaherpesvirus 4</taxon>
    </lineage>
</organism>
<dbReference type="EMBL" id="X17684">
    <property type="protein sequence ID" value="CAA35669.1"/>
    <property type="molecule type" value="Genomic_DNA"/>
</dbReference>
<dbReference type="PIR" id="S36704">
    <property type="entry name" value="S36704"/>
</dbReference>
<dbReference type="GO" id="GO:0006260">
    <property type="term" value="P:DNA replication"/>
    <property type="evidence" value="ECO:0007669"/>
    <property type="project" value="UniProtKB-KW"/>
</dbReference>
<name>UL52_EHV4</name>
<comment type="function">
    <text>Involved in DNA replication.</text>
</comment>
<comment type="similarity">
    <text evidence="1">Belongs to the herpesviridae UL52 family.</text>
</comment>
<feature type="chain" id="PRO_0000116107" description="DNA helicase/primase complex protein">
    <location>
        <begin position="1"/>
        <end position="197" status="greater than"/>
    </location>
</feature>
<feature type="non-terminal residue">
    <location>
        <position position="197"/>
    </location>
</feature>
<keyword id="KW-0235">DNA replication</keyword>